<protein>
    <recommendedName>
        <fullName evidence="1">Phosphatidylserine decarboxylase proenzyme</fullName>
        <ecNumber evidence="1">4.1.1.65</ecNumber>
    </recommendedName>
    <component>
        <recommendedName>
            <fullName evidence="1">Phosphatidylserine decarboxylase alpha chain</fullName>
        </recommendedName>
    </component>
    <component>
        <recommendedName>
            <fullName evidence="1">Phosphatidylserine decarboxylase beta chain</fullName>
        </recommendedName>
    </component>
</protein>
<name>PSD_STRGG</name>
<proteinExistence type="inferred from homology"/>
<sequence>MPDSTSSASRGGVRIARGASPWLLPTVATAALSLARARKSGRWAAVAVPTTALAAGMLWFFRDPEREITDGRVISPADGVVQSIMPWKDGRTRVAIFMSPLNVHVNRAPLAGTVTSVEHIPGGFVPAFNKESENNERVVWHFDTELGDIEMVQIAGAVARRIVPYLPEGTKVEQGERIGLIRFGSRVDIYLPEGIDVAVEVGQATTAGVTRIDRD</sequence>
<evidence type="ECO:0000255" key="1">
    <source>
        <dbReference type="HAMAP-Rule" id="MF_00664"/>
    </source>
</evidence>
<keyword id="KW-1003">Cell membrane</keyword>
<keyword id="KW-0210">Decarboxylase</keyword>
<keyword id="KW-0444">Lipid biosynthesis</keyword>
<keyword id="KW-0443">Lipid metabolism</keyword>
<keyword id="KW-0456">Lyase</keyword>
<keyword id="KW-0472">Membrane</keyword>
<keyword id="KW-0594">Phospholipid biosynthesis</keyword>
<keyword id="KW-1208">Phospholipid metabolism</keyword>
<keyword id="KW-0670">Pyruvate</keyword>
<keyword id="KW-0865">Zymogen</keyword>
<accession>B1VV20</accession>
<reference key="1">
    <citation type="journal article" date="2008" name="J. Bacteriol.">
        <title>Genome sequence of the streptomycin-producing microorganism Streptomyces griseus IFO 13350.</title>
        <authorList>
            <person name="Ohnishi Y."/>
            <person name="Ishikawa J."/>
            <person name="Hara H."/>
            <person name="Suzuki H."/>
            <person name="Ikenoya M."/>
            <person name="Ikeda H."/>
            <person name="Yamashita A."/>
            <person name="Hattori M."/>
            <person name="Horinouchi S."/>
        </authorList>
    </citation>
    <scope>NUCLEOTIDE SEQUENCE [LARGE SCALE GENOMIC DNA]</scope>
    <source>
        <strain>JCM 4626 / CBS 651.72 / NBRC 13350 / KCC S-0626 / ISP 5235</strain>
    </source>
</reference>
<gene>
    <name evidence="1" type="primary">psd</name>
    <name type="ordered locus">SGR_1175</name>
</gene>
<organism>
    <name type="scientific">Streptomyces griseus subsp. griseus (strain JCM 4626 / CBS 651.72 / NBRC 13350 / KCC S-0626 / ISP 5235)</name>
    <dbReference type="NCBI Taxonomy" id="455632"/>
    <lineage>
        <taxon>Bacteria</taxon>
        <taxon>Bacillati</taxon>
        <taxon>Actinomycetota</taxon>
        <taxon>Actinomycetes</taxon>
        <taxon>Kitasatosporales</taxon>
        <taxon>Streptomycetaceae</taxon>
        <taxon>Streptomyces</taxon>
    </lineage>
</organism>
<comment type="function">
    <text evidence="1">Catalyzes the formation of phosphatidylethanolamine (PtdEtn) from phosphatidylserine (PtdSer).</text>
</comment>
<comment type="catalytic activity">
    <reaction evidence="1">
        <text>a 1,2-diacyl-sn-glycero-3-phospho-L-serine + H(+) = a 1,2-diacyl-sn-glycero-3-phosphoethanolamine + CO2</text>
        <dbReference type="Rhea" id="RHEA:20828"/>
        <dbReference type="ChEBI" id="CHEBI:15378"/>
        <dbReference type="ChEBI" id="CHEBI:16526"/>
        <dbReference type="ChEBI" id="CHEBI:57262"/>
        <dbReference type="ChEBI" id="CHEBI:64612"/>
        <dbReference type="EC" id="4.1.1.65"/>
    </reaction>
</comment>
<comment type="cofactor">
    <cofactor evidence="1">
        <name>pyruvate</name>
        <dbReference type="ChEBI" id="CHEBI:15361"/>
    </cofactor>
    <text evidence="1">Binds 1 pyruvoyl group covalently per subunit.</text>
</comment>
<comment type="pathway">
    <text evidence="1">Phospholipid metabolism; phosphatidylethanolamine biosynthesis; phosphatidylethanolamine from CDP-diacylglycerol: step 2/2.</text>
</comment>
<comment type="subunit">
    <text evidence="1">Heterodimer of a large membrane-associated beta subunit and a small pyruvoyl-containing alpha subunit.</text>
</comment>
<comment type="subcellular location">
    <subcellularLocation>
        <location evidence="1">Cell membrane</location>
        <topology evidence="1">Peripheral membrane protein</topology>
    </subcellularLocation>
</comment>
<comment type="PTM">
    <text evidence="1">Is synthesized initially as an inactive proenzyme. Formation of the active enzyme involves a self-maturation process in which the active site pyruvoyl group is generated from an internal serine residue via an autocatalytic post-translational modification. Two non-identical subunits are generated from the proenzyme in this reaction, and the pyruvate is formed at the N-terminus of the alpha chain, which is derived from the carboxyl end of the proenzyme. The post-translation cleavage follows an unusual pathway, termed non-hydrolytic serinolysis, in which the side chain hydroxyl group of the serine supplies its oxygen atom to form the C-terminus of the beta chain, while the remainder of the serine residue undergoes an oxidative deamination to produce ammonia and the pyruvoyl prosthetic group on the alpha chain.</text>
</comment>
<comment type="similarity">
    <text evidence="1">Belongs to the phosphatidylserine decarboxylase family. PSD-A subfamily.</text>
</comment>
<feature type="chain" id="PRO_1000131492" description="Phosphatidylserine decarboxylase beta chain" evidence="1">
    <location>
        <begin position="1"/>
        <end position="184"/>
    </location>
</feature>
<feature type="chain" id="PRO_1000131493" description="Phosphatidylserine decarboxylase alpha chain" evidence="1">
    <location>
        <begin position="185"/>
        <end position="215"/>
    </location>
</feature>
<feature type="active site" description="Schiff-base intermediate with substrate; via pyruvic acid" evidence="1">
    <location>
        <position position="185"/>
    </location>
</feature>
<feature type="site" description="Cleavage (non-hydrolytic); by autocatalysis" evidence="1">
    <location>
        <begin position="184"/>
        <end position="185"/>
    </location>
</feature>
<feature type="modified residue" description="Pyruvic acid (Ser); by autocatalysis" evidence="1">
    <location>
        <position position="185"/>
    </location>
</feature>
<dbReference type="EC" id="4.1.1.65" evidence="1"/>
<dbReference type="EMBL" id="AP009493">
    <property type="protein sequence ID" value="BAG18004.1"/>
    <property type="molecule type" value="Genomic_DNA"/>
</dbReference>
<dbReference type="RefSeq" id="WP_003965076.1">
    <property type="nucleotide sequence ID" value="NC_010572.1"/>
</dbReference>
<dbReference type="SMR" id="B1VV20"/>
<dbReference type="KEGG" id="sgr:SGR_1175"/>
<dbReference type="eggNOG" id="COG0688">
    <property type="taxonomic scope" value="Bacteria"/>
</dbReference>
<dbReference type="HOGENOM" id="CLU_072492_1_0_11"/>
<dbReference type="UniPathway" id="UPA00558">
    <property type="reaction ID" value="UER00616"/>
</dbReference>
<dbReference type="Proteomes" id="UP000001685">
    <property type="component" value="Chromosome"/>
</dbReference>
<dbReference type="GO" id="GO:0005886">
    <property type="term" value="C:plasma membrane"/>
    <property type="evidence" value="ECO:0007669"/>
    <property type="project" value="UniProtKB-SubCell"/>
</dbReference>
<dbReference type="GO" id="GO:0004609">
    <property type="term" value="F:phosphatidylserine decarboxylase activity"/>
    <property type="evidence" value="ECO:0007669"/>
    <property type="project" value="UniProtKB-UniRule"/>
</dbReference>
<dbReference type="GO" id="GO:0006646">
    <property type="term" value="P:phosphatidylethanolamine biosynthetic process"/>
    <property type="evidence" value="ECO:0007669"/>
    <property type="project" value="UniProtKB-UniRule"/>
</dbReference>
<dbReference type="HAMAP" id="MF_00664">
    <property type="entry name" value="PS_decarb_PSD_A"/>
    <property type="match status" value="1"/>
</dbReference>
<dbReference type="InterPro" id="IPR003817">
    <property type="entry name" value="PS_Dcarbxylase"/>
</dbReference>
<dbReference type="InterPro" id="IPR033175">
    <property type="entry name" value="PSD-A"/>
</dbReference>
<dbReference type="NCBIfam" id="NF003683">
    <property type="entry name" value="PRK05305.2-3"/>
    <property type="match status" value="1"/>
</dbReference>
<dbReference type="NCBIfam" id="NF003685">
    <property type="entry name" value="PRK05305.2-5"/>
    <property type="match status" value="1"/>
</dbReference>
<dbReference type="PANTHER" id="PTHR35809">
    <property type="entry name" value="ARCHAETIDYLSERINE DECARBOXYLASE PROENZYME-RELATED"/>
    <property type="match status" value="1"/>
</dbReference>
<dbReference type="PANTHER" id="PTHR35809:SF1">
    <property type="entry name" value="ARCHAETIDYLSERINE DECARBOXYLASE PROENZYME-RELATED"/>
    <property type="match status" value="1"/>
</dbReference>
<dbReference type="Pfam" id="PF02666">
    <property type="entry name" value="PS_Dcarbxylase"/>
    <property type="match status" value="1"/>
</dbReference>